<protein>
    <recommendedName>
        <fullName evidence="2">Transcription and mRNA export factor SUS1</fullName>
    </recommendedName>
</protein>
<sequence length="106" mass="11779">MEEGELSTGAAAGGGDELYNALHQRLVASGEWQRLLILLRRMLDESGWESEFQAYATTKAKQQPVLSVPDLIDVLTPHAQDTLPAHVRAHLLDKLTNFLDRNLEDA</sequence>
<name>SUS1_MYCMD</name>
<dbReference type="EMBL" id="CM003162">
    <property type="protein sequence ID" value="KIS65741.1"/>
    <property type="molecule type" value="Genomic_DNA"/>
</dbReference>
<dbReference type="RefSeq" id="XP_011392755.1">
    <property type="nucleotide sequence ID" value="XM_011394453.1"/>
</dbReference>
<dbReference type="SMR" id="P0CT23"/>
<dbReference type="STRING" id="237631.P0CT23"/>
<dbReference type="EnsemblFungi" id="KIS65741">
    <property type="protein sequence ID" value="KIS65741"/>
    <property type="gene ID" value="UMAG_12047"/>
</dbReference>
<dbReference type="GeneID" id="23567833"/>
<dbReference type="KEGG" id="uma:UMAG_12047"/>
<dbReference type="VEuPathDB" id="FungiDB:UMAG_12047"/>
<dbReference type="InParanoid" id="P0CT23"/>
<dbReference type="OrthoDB" id="6221744at2759"/>
<dbReference type="Proteomes" id="UP000000561">
    <property type="component" value="Chromosome 23"/>
</dbReference>
<dbReference type="GO" id="GO:0071819">
    <property type="term" value="C:DUBm complex"/>
    <property type="evidence" value="ECO:0000318"/>
    <property type="project" value="GO_Central"/>
</dbReference>
<dbReference type="GO" id="GO:0005643">
    <property type="term" value="C:nuclear pore"/>
    <property type="evidence" value="ECO:0007669"/>
    <property type="project" value="UniProtKB-UniRule"/>
</dbReference>
<dbReference type="GO" id="GO:0005654">
    <property type="term" value="C:nucleoplasm"/>
    <property type="evidence" value="ECO:0007669"/>
    <property type="project" value="UniProtKB-SubCell"/>
</dbReference>
<dbReference type="GO" id="GO:0000932">
    <property type="term" value="C:P-body"/>
    <property type="evidence" value="ECO:0007669"/>
    <property type="project" value="UniProtKB-SubCell"/>
</dbReference>
<dbReference type="GO" id="GO:0000124">
    <property type="term" value="C:SAGA complex"/>
    <property type="evidence" value="ECO:0000318"/>
    <property type="project" value="GO_Central"/>
</dbReference>
<dbReference type="GO" id="GO:0070390">
    <property type="term" value="C:transcription export complex 2"/>
    <property type="evidence" value="ECO:0007669"/>
    <property type="project" value="UniProtKB-UniRule"/>
</dbReference>
<dbReference type="GO" id="GO:0003682">
    <property type="term" value="F:chromatin binding"/>
    <property type="evidence" value="ECO:0000318"/>
    <property type="project" value="GO_Central"/>
</dbReference>
<dbReference type="GO" id="GO:0003713">
    <property type="term" value="F:transcription coactivator activity"/>
    <property type="evidence" value="ECO:0000318"/>
    <property type="project" value="GO_Central"/>
</dbReference>
<dbReference type="GO" id="GO:0006325">
    <property type="term" value="P:chromatin organization"/>
    <property type="evidence" value="ECO:0007669"/>
    <property type="project" value="UniProtKB-KW"/>
</dbReference>
<dbReference type="GO" id="GO:0016973">
    <property type="term" value="P:poly(A)+ mRNA export from nucleus"/>
    <property type="evidence" value="ECO:0000318"/>
    <property type="project" value="GO_Central"/>
</dbReference>
<dbReference type="GO" id="GO:0015031">
    <property type="term" value="P:protein transport"/>
    <property type="evidence" value="ECO:0007669"/>
    <property type="project" value="UniProtKB-KW"/>
</dbReference>
<dbReference type="GO" id="GO:0006357">
    <property type="term" value="P:regulation of transcription by RNA polymerase II"/>
    <property type="evidence" value="ECO:0000318"/>
    <property type="project" value="GO_Central"/>
</dbReference>
<dbReference type="GO" id="GO:0006368">
    <property type="term" value="P:transcription elongation by RNA polymerase II"/>
    <property type="evidence" value="ECO:0007669"/>
    <property type="project" value="UniProtKB-UniRule"/>
</dbReference>
<dbReference type="FunFam" id="1.10.246.140:FF:000003">
    <property type="entry name" value="Transcription and mRNA export factor SUS1"/>
    <property type="match status" value="1"/>
</dbReference>
<dbReference type="Gene3D" id="1.10.246.140">
    <property type="match status" value="1"/>
</dbReference>
<dbReference type="HAMAP" id="MF_03046">
    <property type="entry name" value="ENY2_Sus1"/>
    <property type="match status" value="1"/>
</dbReference>
<dbReference type="InterPro" id="IPR018783">
    <property type="entry name" value="TF_ENY2"/>
</dbReference>
<dbReference type="InterPro" id="IPR038212">
    <property type="entry name" value="TF_EnY2_sf"/>
</dbReference>
<dbReference type="PANTHER" id="PTHR12514">
    <property type="entry name" value="ENHANCER OF YELLOW 2 TRANSCRIPTION FACTOR"/>
    <property type="match status" value="1"/>
</dbReference>
<dbReference type="Pfam" id="PF10163">
    <property type="entry name" value="EnY2"/>
    <property type="match status" value="1"/>
</dbReference>
<proteinExistence type="inferred from homology"/>
<comment type="function">
    <text evidence="1">Involved in mRNA export coupled transcription activation by association with both the TREX-2 and the SAGA complexes. At the promoters, SAGA is required for recruitment of the basal transcription machinery. It influences RNA polymerase II transcriptional activity through different activities such as TBP interaction and promoter selectivity, interaction with transcription activators, and chromatin modification through histone acetylation and deubiquitination. Within the SAGA complex, participates in a subcomplex required for deubiquitination of H2B and for the maintenance of steady-state H3 methylation levels. The TREX-2 complex functions in docking export-competent ribonucleoprotein particles (mRNPs) to the nuclear entrance of the nuclear pore complex (nuclear basket). TREX-2 participates in mRNA export and accurate chromatin positioning in the nucleus by tethering genes to the nuclear periphery. May also be involved in cytoplasmic mRNA decay by interaction with components of P-bodies (By similarity).</text>
</comment>
<comment type="subunit">
    <text evidence="2">Component of the nuclear pore complex (NPC)-associated TREX-2 complex (transcription and export complex 2), composed of at least SUS1, SAC3, THP1, SEM1, and CDC31. TREX-2 contains 2 SUS1 chains. The TREX-2 complex interacts with the nucleoporin NUP1. Component of the 1.8 MDa SAGA transcription coactivator-HAT complex. SAGA is built of 5 distinct domains with specialized functions. Within the SAGA complex, SUS1, SGF11, SGF73 and UBP8 form an additional subcomplex of SAGA called the DUB module (deubiquitination module). Interacts directly with THP1, SAC3, SGF11, and with the RNA polymerase II.</text>
</comment>
<comment type="subcellular location">
    <subcellularLocation>
        <location evidence="2">Nucleus</location>
        <location evidence="2">Nucleoplasm</location>
    </subcellularLocation>
    <subcellularLocation>
        <location evidence="2">Cytoplasm</location>
        <location evidence="2">P-body</location>
    </subcellularLocation>
</comment>
<comment type="similarity">
    <text evidence="2">Belongs to the ENY2 family.</text>
</comment>
<organism>
    <name type="scientific">Mycosarcoma maydis</name>
    <name type="common">Corn smut fungus</name>
    <name type="synonym">Ustilago maydis</name>
    <dbReference type="NCBI Taxonomy" id="5270"/>
    <lineage>
        <taxon>Eukaryota</taxon>
        <taxon>Fungi</taxon>
        <taxon>Dikarya</taxon>
        <taxon>Basidiomycota</taxon>
        <taxon>Ustilaginomycotina</taxon>
        <taxon>Ustilaginomycetes</taxon>
        <taxon>Ustilaginales</taxon>
        <taxon>Ustilaginaceae</taxon>
        <taxon>Mycosarcoma</taxon>
    </lineage>
</organism>
<keyword id="KW-0010">Activator</keyword>
<keyword id="KW-0156">Chromatin regulator</keyword>
<keyword id="KW-0963">Cytoplasm</keyword>
<keyword id="KW-0509">mRNA transport</keyword>
<keyword id="KW-0539">Nucleus</keyword>
<keyword id="KW-0653">Protein transport</keyword>
<keyword id="KW-1185">Reference proteome</keyword>
<keyword id="KW-0804">Transcription</keyword>
<keyword id="KW-0805">Transcription regulation</keyword>
<keyword id="KW-0811">Translocation</keyword>
<keyword id="KW-0813">Transport</keyword>
<accession>P0CT23</accession>
<accession>A0A0D1DNV6</accession>
<accession>Q4P0B9</accession>
<feature type="chain" id="PRO_0000423832" description="Transcription and mRNA export factor SUS1">
    <location>
        <begin position="1"/>
        <end position="106"/>
    </location>
</feature>
<evidence type="ECO:0000250" key="1"/>
<evidence type="ECO:0000255" key="2">
    <source>
        <dbReference type="HAMAP-Rule" id="MF_03046"/>
    </source>
</evidence>
<reference key="1">
    <citation type="journal article" date="2006" name="Nature">
        <title>Insights from the genome of the biotrophic fungal plant pathogen Ustilago maydis.</title>
        <authorList>
            <person name="Kaemper J."/>
            <person name="Kahmann R."/>
            <person name="Boelker M."/>
            <person name="Ma L.-J."/>
            <person name="Brefort T."/>
            <person name="Saville B.J."/>
            <person name="Banuett F."/>
            <person name="Kronstad J.W."/>
            <person name="Gold S.E."/>
            <person name="Mueller O."/>
            <person name="Perlin M.H."/>
            <person name="Woesten H.A.B."/>
            <person name="de Vries R."/>
            <person name="Ruiz-Herrera J."/>
            <person name="Reynaga-Pena C.G."/>
            <person name="Snetselaar K."/>
            <person name="McCann M."/>
            <person name="Perez-Martin J."/>
            <person name="Feldbruegge M."/>
            <person name="Basse C.W."/>
            <person name="Steinberg G."/>
            <person name="Ibeas J.I."/>
            <person name="Holloman W."/>
            <person name="Guzman P."/>
            <person name="Farman M.L."/>
            <person name="Stajich J.E."/>
            <person name="Sentandreu R."/>
            <person name="Gonzalez-Prieto J.M."/>
            <person name="Kennell J.C."/>
            <person name="Molina L."/>
            <person name="Schirawski J."/>
            <person name="Mendoza-Mendoza A."/>
            <person name="Greilinger D."/>
            <person name="Muench K."/>
            <person name="Roessel N."/>
            <person name="Scherer M."/>
            <person name="Vranes M."/>
            <person name="Ladendorf O."/>
            <person name="Vincon V."/>
            <person name="Fuchs U."/>
            <person name="Sandrock B."/>
            <person name="Meng S."/>
            <person name="Ho E.C.H."/>
            <person name="Cahill M.J."/>
            <person name="Boyce K.J."/>
            <person name="Klose J."/>
            <person name="Klosterman S.J."/>
            <person name="Deelstra H.J."/>
            <person name="Ortiz-Castellanos L."/>
            <person name="Li W."/>
            <person name="Sanchez-Alonso P."/>
            <person name="Schreier P.H."/>
            <person name="Haeuser-Hahn I."/>
            <person name="Vaupel M."/>
            <person name="Koopmann E."/>
            <person name="Friedrich G."/>
            <person name="Voss H."/>
            <person name="Schlueter T."/>
            <person name="Margolis J."/>
            <person name="Platt D."/>
            <person name="Swimmer C."/>
            <person name="Gnirke A."/>
            <person name="Chen F."/>
            <person name="Vysotskaia V."/>
            <person name="Mannhaupt G."/>
            <person name="Gueldener U."/>
            <person name="Muensterkoetter M."/>
            <person name="Haase D."/>
            <person name="Oesterheld M."/>
            <person name="Mewes H.-W."/>
            <person name="Mauceli E.W."/>
            <person name="DeCaprio D."/>
            <person name="Wade C.M."/>
            <person name="Butler J."/>
            <person name="Young S.K."/>
            <person name="Jaffe D.B."/>
            <person name="Calvo S.E."/>
            <person name="Nusbaum C."/>
            <person name="Galagan J.E."/>
            <person name="Birren B.W."/>
        </authorList>
    </citation>
    <scope>NUCLEOTIDE SEQUENCE [LARGE SCALE GENOMIC DNA]</scope>
    <source>
        <strain>DSM 14603 / FGSC 9021 / UM521</strain>
    </source>
</reference>
<reference key="2">
    <citation type="submission" date="2014-09" db="EMBL/GenBank/DDBJ databases">
        <authorList>
            <person name="Gueldener U."/>
            <person name="Muensterkoetter M."/>
            <person name="Walter M.C."/>
            <person name="Mannhaupt G."/>
            <person name="Kahmann R."/>
        </authorList>
    </citation>
    <scope>GENOME REANNOTATION</scope>
    <source>
        <strain>DSM 14603 / FGSC 9021 / UM521</strain>
    </source>
</reference>
<gene>
    <name evidence="2" type="primary">SUS1</name>
    <name type="ORF">UMAG_12047</name>
</gene>